<name>AMPI_ANTMY</name>
<reference evidence="5" key="1">
    <citation type="thesis" date="2006" institute="Indraprastha University" country="India">
        <title>Ecological and biochemical studies on Terminalia arjuna - Antheraea mylitta herbivory.</title>
        <authorList>
            <person name="Rai S."/>
        </authorList>
    </citation>
    <scope>PROTEIN SEQUENCE</scope>
    <scope>FUNCTION</scope>
    <scope>SUBUNIT</scope>
    <scope>TISSUE SPECIFICITY</scope>
    <scope>DEVELOPMENTAL STAGE</scope>
    <scope>GLYCOSYLATION</scope>
    <source>
        <strain evidence="2">Daba bivoltine</strain>
        <tissue evidence="2">Hemolymph</tissue>
    </source>
</reference>
<reference key="2">
    <citation type="journal article" date="2010" name="Peptides">
        <title>Purification, characterization and immunolocalization of a novel protease inhibitor from hemolymph of tasar silkworm, Antheraea mylitta.</title>
        <authorList>
            <person name="Rai S."/>
            <person name="Aggarwal K.K."/>
            <person name="Mitra B."/>
            <person name="Das T.K."/>
            <person name="Babu C.R."/>
        </authorList>
    </citation>
    <scope>PROTEIN SEQUENCE</scope>
    <scope>FUNCTION</scope>
    <scope>BIOPHYSICOCHEMICAL PROPERTIES</scope>
    <scope>TISSUE SPECIFICITY</scope>
    <scope>DEVELOPMENTAL STAGE</scope>
    <scope>GLYCOSYLATION</scope>
    <source>
        <strain>Daba bivoltine</strain>
        <tissue>Larval hemolymph</tissue>
    </source>
</reference>
<proteinExistence type="evidence at protein level"/>
<dbReference type="GO" id="GO:0004867">
    <property type="term" value="F:serine-type endopeptidase inhibitor activity"/>
    <property type="evidence" value="ECO:0007669"/>
    <property type="project" value="UniProtKB-KW"/>
</dbReference>
<accession>P84885</accession>
<organism>
    <name type="scientific">Antheraea mylitta</name>
    <name type="common">Tasar silkworm</name>
    <dbReference type="NCBI Taxonomy" id="34739"/>
    <lineage>
        <taxon>Eukaryota</taxon>
        <taxon>Metazoa</taxon>
        <taxon>Ecdysozoa</taxon>
        <taxon>Arthropoda</taxon>
        <taxon>Hexapoda</taxon>
        <taxon>Insecta</taxon>
        <taxon>Pterygota</taxon>
        <taxon>Neoptera</taxon>
        <taxon>Endopterygota</taxon>
        <taxon>Lepidoptera</taxon>
        <taxon>Glossata</taxon>
        <taxon>Ditrysia</taxon>
        <taxon>Bombycoidea</taxon>
        <taxon>Saturniidae</taxon>
        <taxon>Saturniinae</taxon>
        <taxon>Saturniini</taxon>
        <taxon>Antheraea</taxon>
    </lineage>
</organism>
<protein>
    <recommendedName>
        <fullName>Protease inhibitor</fullName>
        <shortName>AmPI</shortName>
    </recommendedName>
</protein>
<feature type="chain" id="PRO_0000279692" description="Protease inhibitor">
    <location>
        <begin position="1"/>
        <end position="20" status="greater than"/>
    </location>
</feature>
<feature type="non-terminal residue" evidence="3 4">
    <location>
        <position position="20"/>
    </location>
</feature>
<sequence>AEPLASQLKEPIAGGGWWAA</sequence>
<comment type="function">
    <text evidence="1 2">Inhibits trypsin and chymotrypsin.</text>
</comment>
<comment type="biophysicochemical properties">
    <phDependence>
        <text evidence="1">Optimum pH is 4.5-9.0. High activity is also seen over the range pH 2.0-4.5. Activity decreases with increasing pH above pH 9.0.</text>
    </phDependence>
    <temperatureDependence>
        <text evidence="1">Optimum temperature is 4-65 degrees Celsius. Activity decreases rapidly at higher temperatures, nearly 40% of activity is retained at 100 degrees Celsius.</text>
    </temperatureDependence>
</comment>
<comment type="subunit">
    <text evidence="1 2">Monomer.</text>
</comment>
<comment type="tissue specificity">
    <text evidence="1 2">Stored in epidermis and secreted into the hemolymph and cuticle. Not detected in the interior of the epidermis, fat body cells or columnar or goblet cells of the midgut epithelium (at protein level).</text>
</comment>
<comment type="developmental stage">
    <text evidence="1 2">Present in newly hatched larvae. Strongly expressed in the cuticle of fourth and fifth instar larvae. In epidermis, levels decreased with the increase in age of instars. In cuticle, levels increased with increase in age of instars.</text>
</comment>
<comment type="PTM">
    <text evidence="1 2">Glycosylated.</text>
</comment>
<keyword id="KW-0903">Direct protein sequencing</keyword>
<keyword id="KW-0325">Glycoprotein</keyword>
<keyword id="KW-0646">Protease inhibitor</keyword>
<keyword id="KW-0722">Serine protease inhibitor</keyword>
<evidence type="ECO:0000269" key="1">
    <source>
    </source>
</evidence>
<evidence type="ECO:0000269" key="2">
    <source ref="1"/>
</evidence>
<evidence type="ECO:0000303" key="3">
    <source>
    </source>
</evidence>
<evidence type="ECO:0000303" key="4">
    <source ref="1"/>
</evidence>
<evidence type="ECO:0000305" key="5"/>